<protein>
    <recommendedName>
        <fullName evidence="1">Small ribosomal subunit protein bS6</fullName>
    </recommendedName>
    <alternativeName>
        <fullName evidence="2">30S ribosomal protein S6</fullName>
    </alternativeName>
</protein>
<name>RS6_STRA3</name>
<proteinExistence type="inferred from homology"/>
<dbReference type="EMBL" id="AL766853">
    <property type="protein sequence ID" value="CAD47418.1"/>
    <property type="molecule type" value="Genomic_DNA"/>
</dbReference>
<dbReference type="RefSeq" id="WP_001151773.1">
    <property type="nucleotide sequence ID" value="NC_004368.1"/>
</dbReference>
<dbReference type="SMR" id="P66597"/>
<dbReference type="GeneID" id="66886554"/>
<dbReference type="KEGG" id="san:rpsF"/>
<dbReference type="eggNOG" id="COG0360">
    <property type="taxonomic scope" value="Bacteria"/>
</dbReference>
<dbReference type="HOGENOM" id="CLU_113441_5_3_9"/>
<dbReference type="Proteomes" id="UP000000823">
    <property type="component" value="Chromosome"/>
</dbReference>
<dbReference type="GO" id="GO:0005737">
    <property type="term" value="C:cytoplasm"/>
    <property type="evidence" value="ECO:0007669"/>
    <property type="project" value="UniProtKB-ARBA"/>
</dbReference>
<dbReference type="GO" id="GO:1990904">
    <property type="term" value="C:ribonucleoprotein complex"/>
    <property type="evidence" value="ECO:0007669"/>
    <property type="project" value="UniProtKB-KW"/>
</dbReference>
<dbReference type="GO" id="GO:0005840">
    <property type="term" value="C:ribosome"/>
    <property type="evidence" value="ECO:0007669"/>
    <property type="project" value="UniProtKB-KW"/>
</dbReference>
<dbReference type="GO" id="GO:0070181">
    <property type="term" value="F:small ribosomal subunit rRNA binding"/>
    <property type="evidence" value="ECO:0007669"/>
    <property type="project" value="TreeGrafter"/>
</dbReference>
<dbReference type="GO" id="GO:0003735">
    <property type="term" value="F:structural constituent of ribosome"/>
    <property type="evidence" value="ECO:0007669"/>
    <property type="project" value="InterPro"/>
</dbReference>
<dbReference type="GO" id="GO:0006412">
    <property type="term" value="P:translation"/>
    <property type="evidence" value="ECO:0007669"/>
    <property type="project" value="UniProtKB-UniRule"/>
</dbReference>
<dbReference type="CDD" id="cd00473">
    <property type="entry name" value="bS6"/>
    <property type="match status" value="1"/>
</dbReference>
<dbReference type="FunFam" id="3.30.70.60:FF:000002">
    <property type="entry name" value="30S ribosomal protein S6"/>
    <property type="match status" value="1"/>
</dbReference>
<dbReference type="Gene3D" id="3.30.70.60">
    <property type="match status" value="1"/>
</dbReference>
<dbReference type="HAMAP" id="MF_00360">
    <property type="entry name" value="Ribosomal_bS6"/>
    <property type="match status" value="1"/>
</dbReference>
<dbReference type="InterPro" id="IPR000529">
    <property type="entry name" value="Ribosomal_bS6"/>
</dbReference>
<dbReference type="InterPro" id="IPR035980">
    <property type="entry name" value="Ribosomal_bS6_sf"/>
</dbReference>
<dbReference type="InterPro" id="IPR020814">
    <property type="entry name" value="Ribosomal_S6_plastid/chlpt"/>
</dbReference>
<dbReference type="InterPro" id="IPR014717">
    <property type="entry name" value="Transl_elong_EF1B/ribsomal_bS6"/>
</dbReference>
<dbReference type="NCBIfam" id="TIGR00166">
    <property type="entry name" value="S6"/>
    <property type="match status" value="1"/>
</dbReference>
<dbReference type="PANTHER" id="PTHR21011">
    <property type="entry name" value="MITOCHONDRIAL 28S RIBOSOMAL PROTEIN S6"/>
    <property type="match status" value="1"/>
</dbReference>
<dbReference type="PANTHER" id="PTHR21011:SF1">
    <property type="entry name" value="SMALL RIBOSOMAL SUBUNIT PROTEIN BS6M"/>
    <property type="match status" value="1"/>
</dbReference>
<dbReference type="Pfam" id="PF01250">
    <property type="entry name" value="Ribosomal_S6"/>
    <property type="match status" value="1"/>
</dbReference>
<dbReference type="SUPFAM" id="SSF54995">
    <property type="entry name" value="Ribosomal protein S6"/>
    <property type="match status" value="1"/>
</dbReference>
<evidence type="ECO:0000255" key="1">
    <source>
        <dbReference type="HAMAP-Rule" id="MF_00360"/>
    </source>
</evidence>
<evidence type="ECO:0000305" key="2"/>
<organism>
    <name type="scientific">Streptococcus agalactiae serotype III (strain NEM316)</name>
    <dbReference type="NCBI Taxonomy" id="211110"/>
    <lineage>
        <taxon>Bacteria</taxon>
        <taxon>Bacillati</taxon>
        <taxon>Bacillota</taxon>
        <taxon>Bacilli</taxon>
        <taxon>Lactobacillales</taxon>
        <taxon>Streptococcaceae</taxon>
        <taxon>Streptococcus</taxon>
    </lineage>
</organism>
<keyword id="KW-0687">Ribonucleoprotein</keyword>
<keyword id="KW-0689">Ribosomal protein</keyword>
<keyword id="KW-0694">RNA-binding</keyword>
<keyword id="KW-0699">rRNA-binding</keyword>
<reference key="1">
    <citation type="journal article" date="2002" name="Mol. Microbiol.">
        <title>Genome sequence of Streptococcus agalactiae, a pathogen causing invasive neonatal disease.</title>
        <authorList>
            <person name="Glaser P."/>
            <person name="Rusniok C."/>
            <person name="Buchrieser C."/>
            <person name="Chevalier F."/>
            <person name="Frangeul L."/>
            <person name="Msadek T."/>
            <person name="Zouine M."/>
            <person name="Couve E."/>
            <person name="Lalioui L."/>
            <person name="Poyart C."/>
            <person name="Trieu-Cuot P."/>
            <person name="Kunst F."/>
        </authorList>
    </citation>
    <scope>NUCLEOTIDE SEQUENCE [LARGE SCALE GENOMIC DNA]</scope>
    <source>
        <strain>NEM316</strain>
    </source>
</reference>
<sequence>MAKYEILYIIRPNIEEEAKNALVARFDSILSDNGATVVESKDWEKRRLAYEIQDFTEGLYHIVNVEAEDAVALNEFDRLSKINGDILRHMIVKVD</sequence>
<accession>P66597</accession>
<accession>Q8DXY1</accession>
<accession>Q8E3K0</accession>
<gene>
    <name evidence="1" type="primary">rpsF</name>
    <name type="ordered locus">gbs1759</name>
</gene>
<comment type="function">
    <text evidence="1">Binds together with bS18 to 16S ribosomal RNA.</text>
</comment>
<comment type="similarity">
    <text evidence="1">Belongs to the bacterial ribosomal protein bS6 family.</text>
</comment>
<feature type="chain" id="PRO_0000176845" description="Small ribosomal subunit protein bS6">
    <location>
        <begin position="1"/>
        <end position="95"/>
    </location>
</feature>